<accession>Q7M416</accession>
<comment type="subunit">
    <text evidence="2">Monomer.</text>
</comment>
<comment type="similarity">
    <text evidence="1">Belongs to the globin family.</text>
</comment>
<feature type="chain" id="PRO_0000052480" description="Globin-1">
    <location>
        <begin position="1"/>
        <end position="145"/>
    </location>
</feature>
<feature type="domain" description="Globin" evidence="1">
    <location>
        <begin position="1"/>
        <end position="145"/>
    </location>
</feature>
<feature type="binding site" description="distal binding residue" evidence="1">
    <location>
        <position position="63"/>
    </location>
    <ligand>
        <name>heme b</name>
        <dbReference type="ChEBI" id="CHEBI:60344"/>
    </ligand>
    <ligandPart>
        <name>Fe</name>
        <dbReference type="ChEBI" id="CHEBI:18248"/>
    </ligandPart>
</feature>
<feature type="binding site" description="proximal binding residue" evidence="1">
    <location>
        <position position="92"/>
    </location>
    <ligand>
        <name>heme b</name>
        <dbReference type="ChEBI" id="CHEBI:60344"/>
    </ligand>
    <ligandPart>
        <name>Fe</name>
        <dbReference type="ChEBI" id="CHEBI:18248"/>
    </ligandPart>
</feature>
<sequence>GISADQAKALKDDIAVVAQNPNGCGKALFIKMFEMNPGWVEKFPAWKGKSLDEIKASDKITNHGGKVINELANWINNINSASGILKSQGTAHKGRSIGIEYFENVLPVIDATFAQQMGGAYTAAMKDALKAAWTGVIVPGMKAGY</sequence>
<name>GLB1_LIOJA</name>
<keyword id="KW-0903">Direct protein sequencing</keyword>
<keyword id="KW-0349">Heme</keyword>
<keyword id="KW-0408">Iron</keyword>
<keyword id="KW-0479">Metal-binding</keyword>
<keyword id="KW-0514">Muscle protein</keyword>
<keyword id="KW-0561">Oxygen transport</keyword>
<keyword id="KW-0813">Transport</keyword>
<reference key="1">
    <citation type="journal article" date="1993" name="J. Protein Chem.">
        <title>Amino acid sequence of myoglobin from the chiton Liolophura japonica and a phylogenetic tree for molluscan globins.</title>
        <authorList>
            <person name="Suzuki T."/>
            <person name="Furukohri T."/>
            <person name="Okamoto S."/>
        </authorList>
    </citation>
    <scope>PROTEIN SEQUENCE</scope>
    <scope>SUBUNIT</scope>
    <source>
        <tissue>Radular muscle</tissue>
    </source>
</reference>
<organism>
    <name type="scientific">Liolophura japonica</name>
    <name type="common">Chiton</name>
    <name type="synonym">Acanthopleura japonica</name>
    <dbReference type="NCBI Taxonomy" id="13599"/>
    <lineage>
        <taxon>Eukaryota</taxon>
        <taxon>Metazoa</taxon>
        <taxon>Spiralia</taxon>
        <taxon>Lophotrochozoa</taxon>
        <taxon>Mollusca</taxon>
        <taxon>Polyplacophora</taxon>
        <taxon>Neoloricata</taxon>
        <taxon>Chitonida</taxon>
        <taxon>Chitonina</taxon>
        <taxon>Chitonidae</taxon>
        <taxon>Acanthopleurinae</taxon>
        <taxon>Liolophura</taxon>
    </lineage>
</organism>
<evidence type="ECO:0000255" key="1">
    <source>
        <dbReference type="PROSITE-ProRule" id="PRU00238"/>
    </source>
</evidence>
<evidence type="ECO:0000269" key="2">
    <source>
    </source>
</evidence>
<proteinExistence type="evidence at protein level"/>
<dbReference type="PIR" id="A53868">
    <property type="entry name" value="A53868"/>
</dbReference>
<dbReference type="SMR" id="Q7M416"/>
<dbReference type="GO" id="GO:0020037">
    <property type="term" value="F:heme binding"/>
    <property type="evidence" value="ECO:0007669"/>
    <property type="project" value="InterPro"/>
</dbReference>
<dbReference type="GO" id="GO:0046872">
    <property type="term" value="F:metal ion binding"/>
    <property type="evidence" value="ECO:0007669"/>
    <property type="project" value="UniProtKB-KW"/>
</dbReference>
<dbReference type="GO" id="GO:0019825">
    <property type="term" value="F:oxygen binding"/>
    <property type="evidence" value="ECO:0007669"/>
    <property type="project" value="InterPro"/>
</dbReference>
<dbReference type="GO" id="GO:0005344">
    <property type="term" value="F:oxygen carrier activity"/>
    <property type="evidence" value="ECO:0007669"/>
    <property type="project" value="UniProtKB-KW"/>
</dbReference>
<dbReference type="CDD" id="cd01040">
    <property type="entry name" value="Mb-like"/>
    <property type="match status" value="1"/>
</dbReference>
<dbReference type="Gene3D" id="1.10.490.10">
    <property type="entry name" value="Globins"/>
    <property type="match status" value="1"/>
</dbReference>
<dbReference type="InterPro" id="IPR000971">
    <property type="entry name" value="Globin"/>
</dbReference>
<dbReference type="InterPro" id="IPR009050">
    <property type="entry name" value="Globin-like_sf"/>
</dbReference>
<dbReference type="InterPro" id="IPR012292">
    <property type="entry name" value="Globin/Proto"/>
</dbReference>
<dbReference type="InterPro" id="IPR044399">
    <property type="entry name" value="Mb-like_M"/>
</dbReference>
<dbReference type="Pfam" id="PF00042">
    <property type="entry name" value="Globin"/>
    <property type="match status" value="1"/>
</dbReference>
<dbReference type="SUPFAM" id="SSF46458">
    <property type="entry name" value="Globin-like"/>
    <property type="match status" value="1"/>
</dbReference>
<dbReference type="PROSITE" id="PS01033">
    <property type="entry name" value="GLOBIN"/>
    <property type="match status" value="1"/>
</dbReference>
<protein>
    <recommendedName>
        <fullName>Globin-1</fullName>
    </recommendedName>
    <alternativeName>
        <fullName>Myoglobin I</fullName>
    </alternativeName>
</protein>